<name>GLYA_DESAH</name>
<protein>
    <recommendedName>
        <fullName evidence="1">Serine hydroxymethyltransferase</fullName>
        <shortName evidence="1">SHMT</shortName>
        <shortName evidence="1">Serine methylase</shortName>
        <ecNumber evidence="1">2.1.2.1</ecNumber>
    </recommendedName>
</protein>
<evidence type="ECO:0000255" key="1">
    <source>
        <dbReference type="HAMAP-Rule" id="MF_00051"/>
    </source>
</evidence>
<accession>C0QKX3</accession>
<sequence length="416" mass="44347">MDIGAIKGVDPEVFEIIMQEALRQQEGLELIASENTTSRAVMAAQGSVLTNKYAEGYPSKRYYGGCAMVDRAETLAIDRARELFKAEYANVQPHSGSTANMAAYFSVIKPGDTVLAMDLSHGGHLTHGSPVSFSGRLFNFVHYGLSGETEMIDMDEVAALAEKHRPKLIVAGASAYPRIIDFKAFSDIARSVNALFMVDMAHIAGLVAAGVHPSPVPHADIVTTTTHKTLRGPRGGLILSSNEIGPKISSQIFPGIQGGPLMHVIAAKAVALKEALSPSFAQYQRQVVANAATLADALMDRGMKLVSNGTDNHLMLLNLTHNGISGKDAENRLGAAGITVNKNAVPNDPRGPMITSGIRIGTPLVTTRGMGETEMDLVAELITQALEAPATAETVREKVRSLCAQFPLYKDDTTRG</sequence>
<gene>
    <name evidence="1" type="primary">glyA</name>
    <name type="ordered locus">HRM2_31300</name>
</gene>
<comment type="function">
    <text evidence="1">Catalyzes the reversible interconversion of serine and glycine with tetrahydrofolate (THF) serving as the one-carbon carrier. This reaction serves as the major source of one-carbon groups required for the biosynthesis of purines, thymidylate, methionine, and other important biomolecules. Also exhibits THF-independent aldolase activity toward beta-hydroxyamino acids, producing glycine and aldehydes, via a retro-aldol mechanism.</text>
</comment>
<comment type="catalytic activity">
    <reaction evidence="1">
        <text>(6R)-5,10-methylene-5,6,7,8-tetrahydrofolate + glycine + H2O = (6S)-5,6,7,8-tetrahydrofolate + L-serine</text>
        <dbReference type="Rhea" id="RHEA:15481"/>
        <dbReference type="ChEBI" id="CHEBI:15377"/>
        <dbReference type="ChEBI" id="CHEBI:15636"/>
        <dbReference type="ChEBI" id="CHEBI:33384"/>
        <dbReference type="ChEBI" id="CHEBI:57305"/>
        <dbReference type="ChEBI" id="CHEBI:57453"/>
        <dbReference type="EC" id="2.1.2.1"/>
    </reaction>
</comment>
<comment type="cofactor">
    <cofactor evidence="1">
        <name>pyridoxal 5'-phosphate</name>
        <dbReference type="ChEBI" id="CHEBI:597326"/>
    </cofactor>
</comment>
<comment type="pathway">
    <text evidence="1">One-carbon metabolism; tetrahydrofolate interconversion.</text>
</comment>
<comment type="pathway">
    <text evidence="1">Amino-acid biosynthesis; glycine biosynthesis; glycine from L-serine: step 1/1.</text>
</comment>
<comment type="subunit">
    <text evidence="1">Homodimer.</text>
</comment>
<comment type="subcellular location">
    <subcellularLocation>
        <location evidence="1">Cytoplasm</location>
    </subcellularLocation>
</comment>
<comment type="similarity">
    <text evidence="1">Belongs to the SHMT family.</text>
</comment>
<organism>
    <name type="scientific">Desulforapulum autotrophicum (strain ATCC 43914 / DSM 3382 / VKM B-1955 / HRM2)</name>
    <name type="common">Desulfobacterium autotrophicum</name>
    <dbReference type="NCBI Taxonomy" id="177437"/>
    <lineage>
        <taxon>Bacteria</taxon>
        <taxon>Pseudomonadati</taxon>
        <taxon>Thermodesulfobacteriota</taxon>
        <taxon>Desulfobacteria</taxon>
        <taxon>Desulfobacterales</taxon>
        <taxon>Desulfobacteraceae</taxon>
        <taxon>Desulforapulum</taxon>
    </lineage>
</organism>
<reference key="1">
    <citation type="journal article" date="2009" name="Environ. Microbiol.">
        <title>Genome sequence of Desulfobacterium autotrophicum HRM2, a marine sulfate reducer oxidizing organic carbon completely to carbon dioxide.</title>
        <authorList>
            <person name="Strittmatter A.W."/>
            <person name="Liesegang H."/>
            <person name="Rabus R."/>
            <person name="Decker I."/>
            <person name="Amann J."/>
            <person name="Andres S."/>
            <person name="Henne A."/>
            <person name="Fricke W.F."/>
            <person name="Martinez-Arias R."/>
            <person name="Bartels D."/>
            <person name="Goesmann A."/>
            <person name="Krause L."/>
            <person name="Puehler A."/>
            <person name="Klenk H.P."/>
            <person name="Richter M."/>
            <person name="Schuler M."/>
            <person name="Gloeckner F.O."/>
            <person name="Meyerdierks A."/>
            <person name="Gottschalk G."/>
            <person name="Amann R."/>
        </authorList>
    </citation>
    <scope>NUCLEOTIDE SEQUENCE [LARGE SCALE GENOMIC DNA]</scope>
    <source>
        <strain>ATCC 43914 / DSM 3382 / VKM B-1955 / HRM2</strain>
    </source>
</reference>
<dbReference type="EC" id="2.1.2.1" evidence="1"/>
<dbReference type="EMBL" id="CP001087">
    <property type="protein sequence ID" value="ACN16213.1"/>
    <property type="molecule type" value="Genomic_DNA"/>
</dbReference>
<dbReference type="SMR" id="C0QKX3"/>
<dbReference type="STRING" id="177437.HRM2_31300"/>
<dbReference type="KEGG" id="dat:HRM2_31300"/>
<dbReference type="eggNOG" id="COG0112">
    <property type="taxonomic scope" value="Bacteria"/>
</dbReference>
<dbReference type="HOGENOM" id="CLU_022477_2_1_7"/>
<dbReference type="OrthoDB" id="9803846at2"/>
<dbReference type="UniPathway" id="UPA00193"/>
<dbReference type="UniPathway" id="UPA00288">
    <property type="reaction ID" value="UER01023"/>
</dbReference>
<dbReference type="Proteomes" id="UP000000442">
    <property type="component" value="Chromosome"/>
</dbReference>
<dbReference type="GO" id="GO:0005829">
    <property type="term" value="C:cytosol"/>
    <property type="evidence" value="ECO:0007669"/>
    <property type="project" value="TreeGrafter"/>
</dbReference>
<dbReference type="GO" id="GO:0004372">
    <property type="term" value="F:glycine hydroxymethyltransferase activity"/>
    <property type="evidence" value="ECO:0007669"/>
    <property type="project" value="UniProtKB-UniRule"/>
</dbReference>
<dbReference type="GO" id="GO:0030170">
    <property type="term" value="F:pyridoxal phosphate binding"/>
    <property type="evidence" value="ECO:0007669"/>
    <property type="project" value="UniProtKB-UniRule"/>
</dbReference>
<dbReference type="GO" id="GO:0019264">
    <property type="term" value="P:glycine biosynthetic process from serine"/>
    <property type="evidence" value="ECO:0007669"/>
    <property type="project" value="UniProtKB-UniRule"/>
</dbReference>
<dbReference type="GO" id="GO:0035999">
    <property type="term" value="P:tetrahydrofolate interconversion"/>
    <property type="evidence" value="ECO:0007669"/>
    <property type="project" value="UniProtKB-UniRule"/>
</dbReference>
<dbReference type="CDD" id="cd00378">
    <property type="entry name" value="SHMT"/>
    <property type="match status" value="1"/>
</dbReference>
<dbReference type="FunFam" id="3.40.640.10:FF:000001">
    <property type="entry name" value="Serine hydroxymethyltransferase"/>
    <property type="match status" value="1"/>
</dbReference>
<dbReference type="Gene3D" id="3.90.1150.10">
    <property type="entry name" value="Aspartate Aminotransferase, domain 1"/>
    <property type="match status" value="1"/>
</dbReference>
<dbReference type="Gene3D" id="3.40.640.10">
    <property type="entry name" value="Type I PLP-dependent aspartate aminotransferase-like (Major domain)"/>
    <property type="match status" value="1"/>
</dbReference>
<dbReference type="HAMAP" id="MF_00051">
    <property type="entry name" value="SHMT"/>
    <property type="match status" value="1"/>
</dbReference>
<dbReference type="InterPro" id="IPR015424">
    <property type="entry name" value="PyrdxlP-dep_Trfase"/>
</dbReference>
<dbReference type="InterPro" id="IPR015421">
    <property type="entry name" value="PyrdxlP-dep_Trfase_major"/>
</dbReference>
<dbReference type="InterPro" id="IPR015422">
    <property type="entry name" value="PyrdxlP-dep_Trfase_small"/>
</dbReference>
<dbReference type="InterPro" id="IPR001085">
    <property type="entry name" value="Ser_HO-MeTrfase"/>
</dbReference>
<dbReference type="InterPro" id="IPR049943">
    <property type="entry name" value="Ser_HO-MeTrfase-like"/>
</dbReference>
<dbReference type="InterPro" id="IPR019798">
    <property type="entry name" value="Ser_HO-MeTrfase_PLP_BS"/>
</dbReference>
<dbReference type="InterPro" id="IPR039429">
    <property type="entry name" value="SHMT-like_dom"/>
</dbReference>
<dbReference type="NCBIfam" id="NF000586">
    <property type="entry name" value="PRK00011.1"/>
    <property type="match status" value="1"/>
</dbReference>
<dbReference type="PANTHER" id="PTHR11680">
    <property type="entry name" value="SERINE HYDROXYMETHYLTRANSFERASE"/>
    <property type="match status" value="1"/>
</dbReference>
<dbReference type="PANTHER" id="PTHR11680:SF50">
    <property type="entry name" value="SERINE HYDROXYMETHYLTRANSFERASE"/>
    <property type="match status" value="1"/>
</dbReference>
<dbReference type="Pfam" id="PF00464">
    <property type="entry name" value="SHMT"/>
    <property type="match status" value="1"/>
</dbReference>
<dbReference type="PIRSF" id="PIRSF000412">
    <property type="entry name" value="SHMT"/>
    <property type="match status" value="1"/>
</dbReference>
<dbReference type="SUPFAM" id="SSF53383">
    <property type="entry name" value="PLP-dependent transferases"/>
    <property type="match status" value="1"/>
</dbReference>
<dbReference type="PROSITE" id="PS00096">
    <property type="entry name" value="SHMT"/>
    <property type="match status" value="1"/>
</dbReference>
<feature type="chain" id="PRO_1000202260" description="Serine hydroxymethyltransferase">
    <location>
        <begin position="1"/>
        <end position="416"/>
    </location>
</feature>
<feature type="binding site" evidence="1">
    <location>
        <position position="119"/>
    </location>
    <ligand>
        <name>(6S)-5,6,7,8-tetrahydrofolate</name>
        <dbReference type="ChEBI" id="CHEBI:57453"/>
    </ligand>
</feature>
<feature type="binding site" evidence="1">
    <location>
        <begin position="123"/>
        <end position="125"/>
    </location>
    <ligand>
        <name>(6S)-5,6,7,8-tetrahydrofolate</name>
        <dbReference type="ChEBI" id="CHEBI:57453"/>
    </ligand>
</feature>
<feature type="binding site" evidence="1">
    <location>
        <position position="243"/>
    </location>
    <ligand>
        <name>(6S)-5,6,7,8-tetrahydrofolate</name>
        <dbReference type="ChEBI" id="CHEBI:57453"/>
    </ligand>
</feature>
<feature type="site" description="Plays an important role in substrate specificity" evidence="1">
    <location>
        <position position="227"/>
    </location>
</feature>
<feature type="modified residue" description="N6-(pyridoxal phosphate)lysine" evidence="1">
    <location>
        <position position="228"/>
    </location>
</feature>
<keyword id="KW-0028">Amino-acid biosynthesis</keyword>
<keyword id="KW-0963">Cytoplasm</keyword>
<keyword id="KW-0554">One-carbon metabolism</keyword>
<keyword id="KW-0663">Pyridoxal phosphate</keyword>
<keyword id="KW-1185">Reference proteome</keyword>
<keyword id="KW-0808">Transferase</keyword>
<proteinExistence type="inferred from homology"/>